<accession>B8E9N6</accession>
<sequence length="131" mass="15113">MRHYEIVFMVHPDQSEQVPGMIERYTGVITEANGTIHRLEDWGRRQLAYPILDLHKAHYVLMNVEAKAETIEELETAFRFNDAVLRNMVMRTKVAVTEASPMAKARDERDSRRGPAGERSYDEAHAEEIAE</sequence>
<feature type="chain" id="PRO_1000133543" description="Small ribosomal subunit protein bS6">
    <location>
        <begin position="1"/>
        <end position="131"/>
    </location>
</feature>
<feature type="region of interest" description="Disordered" evidence="2">
    <location>
        <begin position="97"/>
        <end position="131"/>
    </location>
</feature>
<feature type="compositionally biased region" description="Basic and acidic residues" evidence="2">
    <location>
        <begin position="104"/>
        <end position="131"/>
    </location>
</feature>
<evidence type="ECO:0000255" key="1">
    <source>
        <dbReference type="HAMAP-Rule" id="MF_00360"/>
    </source>
</evidence>
<evidence type="ECO:0000256" key="2">
    <source>
        <dbReference type="SAM" id="MobiDB-lite"/>
    </source>
</evidence>
<evidence type="ECO:0000305" key="3"/>
<reference key="1">
    <citation type="submission" date="2008-12" db="EMBL/GenBank/DDBJ databases">
        <title>Complete sequence of chromosome of Shewanella baltica OS223.</title>
        <authorList>
            <consortium name="US DOE Joint Genome Institute"/>
            <person name="Lucas S."/>
            <person name="Copeland A."/>
            <person name="Lapidus A."/>
            <person name="Glavina del Rio T."/>
            <person name="Dalin E."/>
            <person name="Tice H."/>
            <person name="Bruce D."/>
            <person name="Goodwin L."/>
            <person name="Pitluck S."/>
            <person name="Chertkov O."/>
            <person name="Meincke L."/>
            <person name="Brettin T."/>
            <person name="Detter J.C."/>
            <person name="Han C."/>
            <person name="Kuske C.R."/>
            <person name="Larimer F."/>
            <person name="Land M."/>
            <person name="Hauser L."/>
            <person name="Kyrpides N."/>
            <person name="Ovchinnikova G."/>
            <person name="Brettar I."/>
            <person name="Rodrigues J."/>
            <person name="Konstantinidis K."/>
            <person name="Tiedje J."/>
        </authorList>
    </citation>
    <scope>NUCLEOTIDE SEQUENCE [LARGE SCALE GENOMIC DNA]</scope>
    <source>
        <strain>OS223</strain>
    </source>
</reference>
<comment type="function">
    <text evidence="1">Binds together with bS18 to 16S ribosomal RNA.</text>
</comment>
<comment type="similarity">
    <text evidence="1">Belongs to the bacterial ribosomal protein bS6 family.</text>
</comment>
<name>RS6_SHEB2</name>
<gene>
    <name evidence="1" type="primary">rpsF</name>
    <name type="ordered locus">Sbal223_0732</name>
</gene>
<keyword id="KW-0687">Ribonucleoprotein</keyword>
<keyword id="KW-0689">Ribosomal protein</keyword>
<keyword id="KW-0694">RNA-binding</keyword>
<keyword id="KW-0699">rRNA-binding</keyword>
<protein>
    <recommendedName>
        <fullName evidence="1">Small ribosomal subunit protein bS6</fullName>
    </recommendedName>
    <alternativeName>
        <fullName evidence="3">30S ribosomal protein S6</fullName>
    </alternativeName>
</protein>
<organism>
    <name type="scientific">Shewanella baltica (strain OS223)</name>
    <dbReference type="NCBI Taxonomy" id="407976"/>
    <lineage>
        <taxon>Bacteria</taxon>
        <taxon>Pseudomonadati</taxon>
        <taxon>Pseudomonadota</taxon>
        <taxon>Gammaproteobacteria</taxon>
        <taxon>Alteromonadales</taxon>
        <taxon>Shewanellaceae</taxon>
        <taxon>Shewanella</taxon>
    </lineage>
</organism>
<proteinExistence type="inferred from homology"/>
<dbReference type="EMBL" id="CP001252">
    <property type="protein sequence ID" value="ACK45251.1"/>
    <property type="molecule type" value="Genomic_DNA"/>
</dbReference>
<dbReference type="RefSeq" id="WP_006083044.1">
    <property type="nucleotide sequence ID" value="NC_011663.1"/>
</dbReference>
<dbReference type="SMR" id="B8E9N6"/>
<dbReference type="GeneID" id="11771052"/>
<dbReference type="KEGG" id="sbp:Sbal223_0732"/>
<dbReference type="HOGENOM" id="CLU_113441_6_1_6"/>
<dbReference type="Proteomes" id="UP000002507">
    <property type="component" value="Chromosome"/>
</dbReference>
<dbReference type="GO" id="GO:0022627">
    <property type="term" value="C:cytosolic small ribosomal subunit"/>
    <property type="evidence" value="ECO:0007669"/>
    <property type="project" value="TreeGrafter"/>
</dbReference>
<dbReference type="GO" id="GO:0070181">
    <property type="term" value="F:small ribosomal subunit rRNA binding"/>
    <property type="evidence" value="ECO:0007669"/>
    <property type="project" value="TreeGrafter"/>
</dbReference>
<dbReference type="GO" id="GO:0003735">
    <property type="term" value="F:structural constituent of ribosome"/>
    <property type="evidence" value="ECO:0007669"/>
    <property type="project" value="InterPro"/>
</dbReference>
<dbReference type="GO" id="GO:0006412">
    <property type="term" value="P:translation"/>
    <property type="evidence" value="ECO:0007669"/>
    <property type="project" value="UniProtKB-UniRule"/>
</dbReference>
<dbReference type="CDD" id="cd00473">
    <property type="entry name" value="bS6"/>
    <property type="match status" value="1"/>
</dbReference>
<dbReference type="FunFam" id="3.30.70.60:FF:000003">
    <property type="entry name" value="30S ribosomal protein S6"/>
    <property type="match status" value="1"/>
</dbReference>
<dbReference type="Gene3D" id="3.30.70.60">
    <property type="match status" value="1"/>
</dbReference>
<dbReference type="HAMAP" id="MF_00360">
    <property type="entry name" value="Ribosomal_bS6"/>
    <property type="match status" value="1"/>
</dbReference>
<dbReference type="InterPro" id="IPR000529">
    <property type="entry name" value="Ribosomal_bS6"/>
</dbReference>
<dbReference type="InterPro" id="IPR035980">
    <property type="entry name" value="Ribosomal_bS6_sf"/>
</dbReference>
<dbReference type="InterPro" id="IPR020814">
    <property type="entry name" value="Ribosomal_S6_plastid/chlpt"/>
</dbReference>
<dbReference type="InterPro" id="IPR014717">
    <property type="entry name" value="Transl_elong_EF1B/ribsomal_bS6"/>
</dbReference>
<dbReference type="NCBIfam" id="TIGR00166">
    <property type="entry name" value="S6"/>
    <property type="match status" value="1"/>
</dbReference>
<dbReference type="PANTHER" id="PTHR21011">
    <property type="entry name" value="MITOCHONDRIAL 28S RIBOSOMAL PROTEIN S6"/>
    <property type="match status" value="1"/>
</dbReference>
<dbReference type="PANTHER" id="PTHR21011:SF1">
    <property type="entry name" value="SMALL RIBOSOMAL SUBUNIT PROTEIN BS6M"/>
    <property type="match status" value="1"/>
</dbReference>
<dbReference type="Pfam" id="PF01250">
    <property type="entry name" value="Ribosomal_S6"/>
    <property type="match status" value="1"/>
</dbReference>
<dbReference type="SUPFAM" id="SSF54995">
    <property type="entry name" value="Ribosomal protein S6"/>
    <property type="match status" value="1"/>
</dbReference>